<accession>Q8A0L8</accession>
<reference key="1">
    <citation type="journal article" date="2003" name="Science">
        <title>A genomic view of the human-Bacteroides thetaiotaomicron symbiosis.</title>
        <authorList>
            <person name="Xu J."/>
            <person name="Bjursell M.K."/>
            <person name="Himrod J."/>
            <person name="Deng S."/>
            <person name="Carmichael L.K."/>
            <person name="Chiang H.C."/>
            <person name="Hooper L.V."/>
            <person name="Gordon J.I."/>
        </authorList>
    </citation>
    <scope>NUCLEOTIDE SEQUENCE [LARGE SCALE GENOMIC DNA]</scope>
    <source>
        <strain>ATCC 29148 / DSM 2079 / JCM 5827 / CCUG 10774 / NCTC 10582 / VPI-5482 / E50</strain>
    </source>
</reference>
<protein>
    <recommendedName>
        <fullName evidence="1">5'-nucleotidase SurE</fullName>
        <ecNumber evidence="1">3.1.3.5</ecNumber>
    </recommendedName>
    <alternativeName>
        <fullName evidence="1">Nucleoside 5'-monophosphate phosphohydrolase</fullName>
    </alternativeName>
</protein>
<comment type="function">
    <text evidence="1">Nucleotidase that shows phosphatase activity on nucleoside 5'-monophosphates.</text>
</comment>
<comment type="catalytic activity">
    <reaction evidence="1">
        <text>a ribonucleoside 5'-phosphate + H2O = a ribonucleoside + phosphate</text>
        <dbReference type="Rhea" id="RHEA:12484"/>
        <dbReference type="ChEBI" id="CHEBI:15377"/>
        <dbReference type="ChEBI" id="CHEBI:18254"/>
        <dbReference type="ChEBI" id="CHEBI:43474"/>
        <dbReference type="ChEBI" id="CHEBI:58043"/>
        <dbReference type="EC" id="3.1.3.5"/>
    </reaction>
</comment>
<comment type="cofactor">
    <cofactor evidence="1">
        <name>a divalent metal cation</name>
        <dbReference type="ChEBI" id="CHEBI:60240"/>
    </cofactor>
    <text evidence="1">Binds 1 divalent metal cation per subunit.</text>
</comment>
<comment type="subcellular location">
    <subcellularLocation>
        <location evidence="1">Cytoplasm</location>
    </subcellularLocation>
</comment>
<comment type="similarity">
    <text evidence="1">Belongs to the SurE nucleotidase family.</text>
</comment>
<feature type="chain" id="PRO_0000111789" description="5'-nucleotidase SurE">
    <location>
        <begin position="1"/>
        <end position="259"/>
    </location>
</feature>
<feature type="binding site" evidence="1">
    <location>
        <position position="13"/>
    </location>
    <ligand>
        <name>a divalent metal cation</name>
        <dbReference type="ChEBI" id="CHEBI:60240"/>
    </ligand>
</feature>
<feature type="binding site" evidence="1">
    <location>
        <position position="14"/>
    </location>
    <ligand>
        <name>a divalent metal cation</name>
        <dbReference type="ChEBI" id="CHEBI:60240"/>
    </ligand>
</feature>
<feature type="binding site" evidence="1">
    <location>
        <position position="44"/>
    </location>
    <ligand>
        <name>a divalent metal cation</name>
        <dbReference type="ChEBI" id="CHEBI:60240"/>
    </ligand>
</feature>
<feature type="binding site" evidence="1">
    <location>
        <position position="100"/>
    </location>
    <ligand>
        <name>a divalent metal cation</name>
        <dbReference type="ChEBI" id="CHEBI:60240"/>
    </ligand>
</feature>
<organism>
    <name type="scientific">Bacteroides thetaiotaomicron (strain ATCC 29148 / DSM 2079 / JCM 5827 / CCUG 10774 / NCTC 10582 / VPI-5482 / E50)</name>
    <dbReference type="NCBI Taxonomy" id="226186"/>
    <lineage>
        <taxon>Bacteria</taxon>
        <taxon>Pseudomonadati</taxon>
        <taxon>Bacteroidota</taxon>
        <taxon>Bacteroidia</taxon>
        <taxon>Bacteroidales</taxon>
        <taxon>Bacteroidaceae</taxon>
        <taxon>Bacteroides</taxon>
    </lineage>
</organism>
<gene>
    <name evidence="1" type="primary">surE</name>
    <name type="ordered locus">BT_4003</name>
</gene>
<name>SURE_BACTN</name>
<proteinExistence type="inferred from homology"/>
<evidence type="ECO:0000255" key="1">
    <source>
        <dbReference type="HAMAP-Rule" id="MF_00060"/>
    </source>
</evidence>
<sequence length="259" mass="28365">MESKKPLILVSNDDGVMAKGISELVKFLRPLGEIVVMAPDSPRSGSGSALTVTHPVHYQLVKREVGLTVYKCTGTPTDCIKLALGSVLDRKPDLIVGGINHGDNSAINVHYSGTMGVVIEGCLKGIPSIGFSLCNHRPDADFEPSGPYIRKIAAMILEKGLPPLTCLNVNFPDTPNLKGVKVCEQAKGCWVNEWVTCPRLDDHNYFWLTGSFTDHELENENNDHWALENGYVAITPTTVDMTAYGFIDELNGYCQQLEF</sequence>
<dbReference type="EC" id="3.1.3.5" evidence="1"/>
<dbReference type="EMBL" id="AE015928">
    <property type="protein sequence ID" value="AAO79108.1"/>
    <property type="molecule type" value="Genomic_DNA"/>
</dbReference>
<dbReference type="RefSeq" id="NP_812914.1">
    <property type="nucleotide sequence ID" value="NC_004663.1"/>
</dbReference>
<dbReference type="RefSeq" id="WP_008764237.1">
    <property type="nucleotide sequence ID" value="NC_004663.1"/>
</dbReference>
<dbReference type="SMR" id="Q8A0L8"/>
<dbReference type="FunCoup" id="Q8A0L8">
    <property type="interactions" value="197"/>
</dbReference>
<dbReference type="STRING" id="226186.BT_4003"/>
<dbReference type="PaxDb" id="226186-BT_4003"/>
<dbReference type="EnsemblBacteria" id="AAO79108">
    <property type="protein sequence ID" value="AAO79108"/>
    <property type="gene ID" value="BT_4003"/>
</dbReference>
<dbReference type="GeneID" id="60925176"/>
<dbReference type="KEGG" id="bth:BT_4003"/>
<dbReference type="PATRIC" id="fig|226186.12.peg.4069"/>
<dbReference type="eggNOG" id="COG0496">
    <property type="taxonomic scope" value="Bacteria"/>
</dbReference>
<dbReference type="HOGENOM" id="CLU_045192_1_0_10"/>
<dbReference type="InParanoid" id="Q8A0L8"/>
<dbReference type="OrthoDB" id="9780815at2"/>
<dbReference type="Proteomes" id="UP000001414">
    <property type="component" value="Chromosome"/>
</dbReference>
<dbReference type="GO" id="GO:0005737">
    <property type="term" value="C:cytoplasm"/>
    <property type="evidence" value="ECO:0007669"/>
    <property type="project" value="UniProtKB-SubCell"/>
</dbReference>
<dbReference type="GO" id="GO:0008254">
    <property type="term" value="F:3'-nucleotidase activity"/>
    <property type="evidence" value="ECO:0000318"/>
    <property type="project" value="GO_Central"/>
</dbReference>
<dbReference type="GO" id="GO:0008253">
    <property type="term" value="F:5'-nucleotidase activity"/>
    <property type="evidence" value="ECO:0000318"/>
    <property type="project" value="GO_Central"/>
</dbReference>
<dbReference type="GO" id="GO:0004309">
    <property type="term" value="F:exopolyphosphatase activity"/>
    <property type="evidence" value="ECO:0000318"/>
    <property type="project" value="GO_Central"/>
</dbReference>
<dbReference type="GO" id="GO:0046872">
    <property type="term" value="F:metal ion binding"/>
    <property type="evidence" value="ECO:0007669"/>
    <property type="project" value="UniProtKB-UniRule"/>
</dbReference>
<dbReference type="GO" id="GO:0000166">
    <property type="term" value="F:nucleotide binding"/>
    <property type="evidence" value="ECO:0007669"/>
    <property type="project" value="UniProtKB-KW"/>
</dbReference>
<dbReference type="Gene3D" id="3.40.1210.10">
    <property type="entry name" value="Survival protein SurE-like phosphatase/nucleotidase"/>
    <property type="match status" value="1"/>
</dbReference>
<dbReference type="HAMAP" id="MF_00060">
    <property type="entry name" value="SurE"/>
    <property type="match status" value="1"/>
</dbReference>
<dbReference type="InterPro" id="IPR030048">
    <property type="entry name" value="SurE"/>
</dbReference>
<dbReference type="InterPro" id="IPR002828">
    <property type="entry name" value="SurE-like_Pase/nucleotidase"/>
</dbReference>
<dbReference type="InterPro" id="IPR036523">
    <property type="entry name" value="SurE-like_sf"/>
</dbReference>
<dbReference type="NCBIfam" id="NF001492">
    <property type="entry name" value="PRK00346.2-2"/>
    <property type="match status" value="1"/>
</dbReference>
<dbReference type="NCBIfam" id="TIGR00087">
    <property type="entry name" value="surE"/>
    <property type="match status" value="1"/>
</dbReference>
<dbReference type="PANTHER" id="PTHR30457">
    <property type="entry name" value="5'-NUCLEOTIDASE SURE"/>
    <property type="match status" value="1"/>
</dbReference>
<dbReference type="PANTHER" id="PTHR30457:SF12">
    <property type="entry name" value="5'_3'-NUCLEOTIDASE SURE"/>
    <property type="match status" value="1"/>
</dbReference>
<dbReference type="Pfam" id="PF01975">
    <property type="entry name" value="SurE"/>
    <property type="match status" value="1"/>
</dbReference>
<dbReference type="SUPFAM" id="SSF64167">
    <property type="entry name" value="SurE-like"/>
    <property type="match status" value="1"/>
</dbReference>
<keyword id="KW-0963">Cytoplasm</keyword>
<keyword id="KW-0378">Hydrolase</keyword>
<keyword id="KW-0479">Metal-binding</keyword>
<keyword id="KW-0547">Nucleotide-binding</keyword>
<keyword id="KW-1185">Reference proteome</keyword>